<proteinExistence type="evidence at protein level"/>
<name>RLP7_YEAST</name>
<comment type="function">
    <text evidence="2">Involved in the biogenesis of the 60S ribosomal subunit. May act as a specificity factor that binds precursor rRNAs and tethers the enzymes that carry out the early 5' to 3' exonucleolytic reactions that generate the mature rRNAs.</text>
</comment>
<comment type="interaction">
    <interactant intactId="EBI-15415">
        <id>P40693</id>
    </interactant>
    <interactant intactId="EBI-24538">
        <id>P38779</id>
        <label>CIC1</label>
    </interactant>
    <organismsDiffer>false</organismsDiffer>
    <experiments>4</experiments>
</comment>
<comment type="interaction">
    <interactant intactId="EBI-15415">
        <id>P40693</id>
    </interactant>
    <interactant intactId="EBI-6170">
        <id>P32892</id>
        <label>DRS1</label>
    </interactant>
    <organismsDiffer>false</organismsDiffer>
    <experiments>4</experiments>
</comment>
<comment type="interaction">
    <interactant intactId="EBI-15415">
        <id>P40693</id>
    </interactant>
    <interactant intactId="EBI-8170">
        <id>Q03532</id>
        <label>HAS1</label>
    </interactant>
    <organismsDiffer>false</organismsDiffer>
    <experiments>4</experiments>
</comment>
<comment type="interaction">
    <interactant intactId="EBI-15415">
        <id>P40693</id>
    </interactant>
    <interactant intactId="EBI-10937">
        <id>P10962</id>
        <label>MAK16</label>
    </interactant>
    <organismsDiffer>false</organismsDiffer>
    <experiments>3</experiments>
</comment>
<comment type="interaction">
    <interactant intactId="EBI-15415">
        <id>P40693</id>
    </interactant>
    <interactant intactId="EBI-10944">
        <id>Q12176</id>
        <label>MAK21</label>
    </interactant>
    <organismsDiffer>false</organismsDiffer>
    <experiments>4</experiments>
</comment>
<comment type="interaction">
    <interactant intactId="EBI-15415">
        <id>P40693</id>
    </interactant>
    <interactant intactId="EBI-10394">
        <id>P38112</id>
        <label>MAK5</label>
    </interactant>
    <organismsDiffer>false</organismsDiffer>
    <experiments>3</experiments>
</comment>
<comment type="interaction">
    <interactant intactId="EBI-15415">
        <id>P40693</id>
    </interactant>
    <interactant intactId="EBI-29259">
        <id>P39744</id>
        <label>NOC2</label>
    </interactant>
    <organismsDiffer>false</organismsDiffer>
    <experiments>4</experiments>
</comment>
<comment type="interaction">
    <interactant intactId="EBI-15415">
        <id>P40693</id>
    </interactant>
    <interactant intactId="EBI-12105">
        <id>Q02892</id>
        <label>NOG1</label>
    </interactant>
    <organismsDiffer>false</organismsDiffer>
    <experiments>4</experiments>
</comment>
<comment type="subcellular location">
    <subcellularLocation>
        <location evidence="2">Nucleus</location>
        <location evidence="2">Nucleolus</location>
    </subcellularLocation>
</comment>
<comment type="miscellaneous">
    <text evidence="3">Present with 7720 molecules/cell in log phase SD medium.</text>
</comment>
<comment type="similarity">
    <text evidence="4">Belongs to the universal ribosomal protein uL30 family.</text>
</comment>
<keyword id="KW-0002">3D-structure</keyword>
<keyword id="KW-0007">Acetylation</keyword>
<keyword id="KW-0539">Nucleus</keyword>
<keyword id="KW-0597">Phosphoprotein</keyword>
<keyword id="KW-1185">Reference proteome</keyword>
<keyword id="KW-0690">Ribosome biogenesis</keyword>
<keyword id="KW-0694">RNA-binding</keyword>
<accession>P40693</accession>
<accession>D6W1H5</accession>
<feature type="initiator methionine" description="Removed" evidence="9">
    <location>
        <position position="1"/>
    </location>
</feature>
<feature type="chain" id="PRO_0000104658" description="Ribosome biogenesis protein RLP7">
    <location>
        <begin position="2"/>
        <end position="322"/>
    </location>
</feature>
<feature type="region of interest" description="Disordered" evidence="1">
    <location>
        <begin position="1"/>
        <end position="52"/>
    </location>
</feature>
<feature type="compositionally biased region" description="Polar residues" evidence="1">
    <location>
        <begin position="1"/>
        <end position="16"/>
    </location>
</feature>
<feature type="compositionally biased region" description="Basic and acidic residues" evidence="1">
    <location>
        <begin position="26"/>
        <end position="45"/>
    </location>
</feature>
<feature type="modified residue" description="N-acetylserine" evidence="9">
    <location>
        <position position="2"/>
    </location>
</feature>
<feature type="modified residue" description="Phosphoserine" evidence="7">
    <location>
        <position position="14"/>
    </location>
</feature>
<feature type="modified residue" description="Phosphothreonine" evidence="6 7 8">
    <location>
        <position position="120"/>
    </location>
</feature>
<feature type="modified residue" description="Phosphoserine" evidence="5 7">
    <location>
        <position position="278"/>
    </location>
</feature>
<feature type="strand" evidence="10">
    <location>
        <begin position="14"/>
        <end position="20"/>
    </location>
</feature>
<feature type="helix" evidence="10">
    <location>
        <begin position="26"/>
        <end position="50"/>
    </location>
</feature>
<feature type="helix" evidence="10">
    <location>
        <begin position="51"/>
        <end position="53"/>
    </location>
</feature>
<feature type="helix" evidence="10">
    <location>
        <begin position="58"/>
        <end position="86"/>
    </location>
</feature>
<feature type="strand" evidence="10">
    <location>
        <begin position="92"/>
        <end position="94"/>
    </location>
</feature>
<feature type="strand" evidence="10">
    <location>
        <begin position="99"/>
        <end position="104"/>
    </location>
</feature>
<feature type="strand" evidence="10">
    <location>
        <begin position="129"/>
        <end position="134"/>
    </location>
</feature>
<feature type="strand" evidence="10">
    <location>
        <begin position="140"/>
        <end position="146"/>
    </location>
</feature>
<feature type="helix" evidence="10">
    <location>
        <begin position="157"/>
        <end position="165"/>
    </location>
</feature>
<feature type="strand" evidence="10">
    <location>
        <begin position="170"/>
        <end position="179"/>
    </location>
</feature>
<feature type="helix" evidence="10">
    <location>
        <begin position="183"/>
        <end position="187"/>
    </location>
</feature>
<feature type="helix" evidence="10">
    <location>
        <begin position="191"/>
        <end position="193"/>
    </location>
</feature>
<feature type="strand" evidence="10">
    <location>
        <begin position="194"/>
        <end position="196"/>
    </location>
</feature>
<feature type="helix" evidence="10">
    <location>
        <begin position="201"/>
        <end position="210"/>
    </location>
</feature>
<feature type="strand" evidence="10">
    <location>
        <begin position="213"/>
        <end position="215"/>
    </location>
</feature>
<feature type="strand" evidence="10">
    <location>
        <begin position="219"/>
        <end position="221"/>
    </location>
</feature>
<feature type="strand" evidence="10">
    <location>
        <begin position="226"/>
        <end position="228"/>
    </location>
</feature>
<feature type="helix" evidence="10">
    <location>
        <begin position="232"/>
        <end position="239"/>
    </location>
</feature>
<feature type="helix" evidence="10">
    <location>
        <begin position="240"/>
        <end position="242"/>
    </location>
</feature>
<feature type="helix" evidence="10">
    <location>
        <begin position="247"/>
        <end position="255"/>
    </location>
</feature>
<feature type="helix" evidence="10">
    <location>
        <begin position="261"/>
        <end position="268"/>
    </location>
</feature>
<feature type="helix" evidence="10">
    <location>
        <begin position="282"/>
        <end position="298"/>
    </location>
</feature>
<feature type="strand" evidence="10">
    <location>
        <begin position="309"/>
        <end position="311"/>
    </location>
</feature>
<feature type="helix" evidence="10">
    <location>
        <begin position="314"/>
        <end position="320"/>
    </location>
</feature>
<gene>
    <name type="primary">RLP7</name>
    <name type="synonym">RPL7</name>
    <name type="ordered locus">YNL002C</name>
    <name type="ORF">N2014</name>
</gene>
<evidence type="ECO:0000256" key="1">
    <source>
        <dbReference type="SAM" id="MobiDB-lite"/>
    </source>
</evidence>
<evidence type="ECO:0000269" key="2">
    <source>
    </source>
</evidence>
<evidence type="ECO:0000269" key="3">
    <source>
    </source>
</evidence>
<evidence type="ECO:0000305" key="4"/>
<evidence type="ECO:0007744" key="5">
    <source>
    </source>
</evidence>
<evidence type="ECO:0007744" key="6">
    <source>
    </source>
</evidence>
<evidence type="ECO:0007744" key="7">
    <source>
    </source>
</evidence>
<evidence type="ECO:0007744" key="8">
    <source>
    </source>
</evidence>
<evidence type="ECO:0007744" key="9">
    <source>
    </source>
</evidence>
<evidence type="ECO:0007829" key="10">
    <source>
        <dbReference type="PDB" id="7R6Q"/>
    </source>
</evidence>
<protein>
    <recommendedName>
        <fullName>Ribosome biogenesis protein RLP7</fullName>
    </recommendedName>
    <alternativeName>
        <fullName>Ribosomal protein L7-like</fullName>
    </alternativeName>
</protein>
<dbReference type="EMBL" id="L19167">
    <property type="protein sequence ID" value="AAA34982.1"/>
    <property type="molecule type" value="Genomic_DNA"/>
</dbReference>
<dbReference type="EMBL" id="X77114">
    <property type="protein sequence ID" value="CAA54376.1"/>
    <property type="molecule type" value="Genomic_DNA"/>
</dbReference>
<dbReference type="EMBL" id="Z71278">
    <property type="protein sequence ID" value="CAA95861.1"/>
    <property type="molecule type" value="Genomic_DNA"/>
</dbReference>
<dbReference type="EMBL" id="AY693031">
    <property type="protein sequence ID" value="AAT93050.1"/>
    <property type="molecule type" value="Genomic_DNA"/>
</dbReference>
<dbReference type="EMBL" id="BK006947">
    <property type="protein sequence ID" value="DAA10541.1"/>
    <property type="molecule type" value="Genomic_DNA"/>
</dbReference>
<dbReference type="PIR" id="S38194">
    <property type="entry name" value="S38194"/>
</dbReference>
<dbReference type="RefSeq" id="NP_014396.3">
    <property type="nucleotide sequence ID" value="NM_001182841.3"/>
</dbReference>
<dbReference type="PDB" id="3JCT">
    <property type="method" value="EM"/>
    <property type="resolution" value="3.08 A"/>
    <property type="chains" value="t=1-322"/>
</dbReference>
<dbReference type="PDB" id="4V7F">
    <property type="method" value="EM"/>
    <property type="resolution" value="8.70 A"/>
    <property type="chains" value="r/s=1-322"/>
</dbReference>
<dbReference type="PDB" id="5Z3G">
    <property type="method" value="EM"/>
    <property type="resolution" value="3.65 A"/>
    <property type="chains" value="D=1-322"/>
</dbReference>
<dbReference type="PDB" id="6C0F">
    <property type="method" value="EM"/>
    <property type="resolution" value="3.70 A"/>
    <property type="chains" value="t=1-322"/>
</dbReference>
<dbReference type="PDB" id="6CB1">
    <property type="method" value="EM"/>
    <property type="resolution" value="4.60 A"/>
    <property type="chains" value="t=1-322"/>
</dbReference>
<dbReference type="PDB" id="6ELZ">
    <property type="method" value="EM"/>
    <property type="resolution" value="3.30 A"/>
    <property type="chains" value="t=1-322"/>
</dbReference>
<dbReference type="PDB" id="6EM1">
    <property type="method" value="EM"/>
    <property type="resolution" value="3.60 A"/>
    <property type="chains" value="t=1-322"/>
</dbReference>
<dbReference type="PDB" id="6EM3">
    <property type="method" value="EM"/>
    <property type="resolution" value="3.20 A"/>
    <property type="chains" value="t=1-322"/>
</dbReference>
<dbReference type="PDB" id="6EM4">
    <property type="method" value="EM"/>
    <property type="resolution" value="4.10 A"/>
    <property type="chains" value="t=1-322"/>
</dbReference>
<dbReference type="PDB" id="6EM5">
    <property type="method" value="EM"/>
    <property type="resolution" value="4.30 A"/>
    <property type="chains" value="t=1-322"/>
</dbReference>
<dbReference type="PDB" id="6M62">
    <property type="method" value="EM"/>
    <property type="resolution" value="3.20 A"/>
    <property type="chains" value="t=1-322"/>
</dbReference>
<dbReference type="PDB" id="6YLX">
    <property type="method" value="EM"/>
    <property type="resolution" value="3.90 A"/>
    <property type="chains" value="t=1-322"/>
</dbReference>
<dbReference type="PDB" id="6YLY">
    <property type="method" value="EM"/>
    <property type="resolution" value="3.80 A"/>
    <property type="chains" value="t=1-322"/>
</dbReference>
<dbReference type="PDB" id="7BTB">
    <property type="method" value="EM"/>
    <property type="resolution" value="3.22 A"/>
    <property type="chains" value="t=1-322"/>
</dbReference>
<dbReference type="PDB" id="7NAC">
    <property type="method" value="EM"/>
    <property type="resolution" value="3.04 A"/>
    <property type="chains" value="t=1-322"/>
</dbReference>
<dbReference type="PDB" id="7NAD">
    <property type="method" value="EM"/>
    <property type="resolution" value="3.04 A"/>
    <property type="chains" value="t=1-322"/>
</dbReference>
<dbReference type="PDB" id="7OHP">
    <property type="method" value="EM"/>
    <property type="resolution" value="3.90 A"/>
    <property type="chains" value="t=1-322"/>
</dbReference>
<dbReference type="PDB" id="7OHQ">
    <property type="method" value="EM"/>
    <property type="resolution" value="3.10 A"/>
    <property type="chains" value="t=1-322"/>
</dbReference>
<dbReference type="PDB" id="7OHR">
    <property type="method" value="EM"/>
    <property type="resolution" value="4.72 A"/>
    <property type="chains" value="t=1-322"/>
</dbReference>
<dbReference type="PDB" id="7OHS">
    <property type="method" value="EM"/>
    <property type="resolution" value="4.38 A"/>
    <property type="chains" value="t=1-322"/>
</dbReference>
<dbReference type="PDB" id="7OHV">
    <property type="method" value="EM"/>
    <property type="resolution" value="3.90 A"/>
    <property type="chains" value="t=1-322"/>
</dbReference>
<dbReference type="PDB" id="7OHW">
    <property type="method" value="EM"/>
    <property type="resolution" value="3.50 A"/>
    <property type="chains" value="t=1-322"/>
</dbReference>
<dbReference type="PDB" id="7OHX">
    <property type="method" value="EM"/>
    <property type="resolution" value="3.30 A"/>
    <property type="chains" value="t=1-322"/>
</dbReference>
<dbReference type="PDB" id="7R6Q">
    <property type="method" value="EM"/>
    <property type="resolution" value="2.98 A"/>
    <property type="chains" value="t=1-322"/>
</dbReference>
<dbReference type="PDB" id="7R72">
    <property type="method" value="EM"/>
    <property type="resolution" value="3.07 A"/>
    <property type="chains" value="t=1-322"/>
</dbReference>
<dbReference type="PDB" id="7R7A">
    <property type="method" value="EM"/>
    <property type="resolution" value="3.04 A"/>
    <property type="chains" value="t=1-322"/>
</dbReference>
<dbReference type="PDB" id="7U0H">
    <property type="method" value="EM"/>
    <property type="resolution" value="2.76 A"/>
    <property type="chains" value="t=1-322"/>
</dbReference>
<dbReference type="PDB" id="7UOO">
    <property type="method" value="EM"/>
    <property type="resolution" value="2.34 A"/>
    <property type="chains" value="t=1-322"/>
</dbReference>
<dbReference type="PDB" id="7UQB">
    <property type="method" value="EM"/>
    <property type="resolution" value="2.43 A"/>
    <property type="chains" value="t=1-322"/>
</dbReference>
<dbReference type="PDB" id="7UQZ">
    <property type="method" value="EM"/>
    <property type="resolution" value="2.44 A"/>
    <property type="chains" value="t=2-322"/>
</dbReference>
<dbReference type="PDB" id="7V08">
    <property type="method" value="EM"/>
    <property type="resolution" value="2.36 A"/>
    <property type="chains" value="t=1-322"/>
</dbReference>
<dbReference type="PDB" id="8E5T">
    <property type="method" value="EM"/>
    <property type="resolution" value="4.00 A"/>
    <property type="chains" value="t=1-322"/>
</dbReference>
<dbReference type="PDB" id="8V83">
    <property type="method" value="EM"/>
    <property type="resolution" value="2.53 A"/>
    <property type="chains" value="t=1-322"/>
</dbReference>
<dbReference type="PDB" id="8V84">
    <property type="method" value="EM"/>
    <property type="resolution" value="2.70 A"/>
    <property type="chains" value="t=1-322"/>
</dbReference>
<dbReference type="PDB" id="8V87">
    <property type="method" value="EM"/>
    <property type="resolution" value="2.66 A"/>
    <property type="chains" value="t=1-322"/>
</dbReference>
<dbReference type="PDBsum" id="3JCT"/>
<dbReference type="PDBsum" id="4V7F"/>
<dbReference type="PDBsum" id="5Z3G"/>
<dbReference type="PDBsum" id="6C0F"/>
<dbReference type="PDBsum" id="6CB1"/>
<dbReference type="PDBsum" id="6ELZ"/>
<dbReference type="PDBsum" id="6EM1"/>
<dbReference type="PDBsum" id="6EM3"/>
<dbReference type="PDBsum" id="6EM4"/>
<dbReference type="PDBsum" id="6EM5"/>
<dbReference type="PDBsum" id="6M62"/>
<dbReference type="PDBsum" id="6YLX"/>
<dbReference type="PDBsum" id="6YLY"/>
<dbReference type="PDBsum" id="7BTB"/>
<dbReference type="PDBsum" id="7NAC"/>
<dbReference type="PDBsum" id="7NAD"/>
<dbReference type="PDBsum" id="7OHP"/>
<dbReference type="PDBsum" id="7OHQ"/>
<dbReference type="PDBsum" id="7OHR"/>
<dbReference type="PDBsum" id="7OHS"/>
<dbReference type="PDBsum" id="7OHV"/>
<dbReference type="PDBsum" id="7OHW"/>
<dbReference type="PDBsum" id="7OHX"/>
<dbReference type="PDBsum" id="7R6Q"/>
<dbReference type="PDBsum" id="7R72"/>
<dbReference type="PDBsum" id="7R7A"/>
<dbReference type="PDBsum" id="7U0H"/>
<dbReference type="PDBsum" id="7UOO"/>
<dbReference type="PDBsum" id="7UQB"/>
<dbReference type="PDBsum" id="7UQZ"/>
<dbReference type="PDBsum" id="7V08"/>
<dbReference type="PDBsum" id="8E5T"/>
<dbReference type="PDBsum" id="8V83"/>
<dbReference type="PDBsum" id="8V84"/>
<dbReference type="PDBsum" id="8V87"/>
<dbReference type="EMDB" id="EMD-10841"/>
<dbReference type="EMDB" id="EMD-10842"/>
<dbReference type="EMDB" id="EMD-12904"/>
<dbReference type="EMDB" id="EMD-12905"/>
<dbReference type="EMDB" id="EMD-12906"/>
<dbReference type="EMDB" id="EMD-12907"/>
<dbReference type="EMDB" id="EMD-12910"/>
<dbReference type="EMDB" id="EMD-12911"/>
<dbReference type="EMDB" id="EMD-12912"/>
<dbReference type="EMDB" id="EMD-24269"/>
<dbReference type="EMDB" id="EMD-24286"/>
<dbReference type="EMDB" id="EMD-24290"/>
<dbReference type="EMDB" id="EMD-24296"/>
<dbReference type="EMDB" id="EMD-26259"/>
<dbReference type="EMDB" id="EMD-26651"/>
<dbReference type="EMDB" id="EMD-26686"/>
<dbReference type="EMDB" id="EMD-26703"/>
<dbReference type="EMDB" id="EMD-27919"/>
<dbReference type="EMDB" id="EMD-30108"/>
<dbReference type="EMDB" id="EMD-30174"/>
<dbReference type="EMDB" id="EMD-43017"/>
<dbReference type="EMDB" id="EMD-43021"/>
<dbReference type="EMDB" id="EMD-43027"/>
<dbReference type="EMDB" id="EMD-6878"/>
<dbReference type="EMDB" id="EMD-7324"/>
<dbReference type="EMDB" id="EMD-7445"/>
<dbReference type="SMR" id="P40693"/>
<dbReference type="BioGRID" id="35823">
    <property type="interactions" value="466"/>
</dbReference>
<dbReference type="DIP" id="DIP-6476N"/>
<dbReference type="FunCoup" id="P40693">
    <property type="interactions" value="514"/>
</dbReference>
<dbReference type="IntAct" id="P40693">
    <property type="interactions" value="70"/>
</dbReference>
<dbReference type="MINT" id="P40693"/>
<dbReference type="STRING" id="4932.YNL002C"/>
<dbReference type="GlyGen" id="P40693">
    <property type="glycosylation" value="4 sites, 1 O-linked glycan (4 sites)"/>
</dbReference>
<dbReference type="iPTMnet" id="P40693"/>
<dbReference type="PaxDb" id="4932-YNL002C"/>
<dbReference type="PeptideAtlas" id="P40693"/>
<dbReference type="EnsemblFungi" id="YNL002C_mRNA">
    <property type="protein sequence ID" value="YNL002C"/>
    <property type="gene ID" value="YNL002C"/>
</dbReference>
<dbReference type="GeneID" id="855730"/>
<dbReference type="KEGG" id="sce:YNL002C"/>
<dbReference type="AGR" id="SGD:S000004947"/>
<dbReference type="SGD" id="S000004947">
    <property type="gene designation" value="RLP7"/>
</dbReference>
<dbReference type="VEuPathDB" id="FungiDB:YNL002C"/>
<dbReference type="eggNOG" id="KOG3184">
    <property type="taxonomic scope" value="Eukaryota"/>
</dbReference>
<dbReference type="GeneTree" id="ENSGT00950000182878"/>
<dbReference type="HOGENOM" id="CLU_055156_1_0_1"/>
<dbReference type="InParanoid" id="P40693"/>
<dbReference type="OMA" id="VNGWGPQ"/>
<dbReference type="OrthoDB" id="28644at2759"/>
<dbReference type="BioCyc" id="YEAST:G3O-33044-MONOMER"/>
<dbReference type="BioGRID-ORCS" id="855730">
    <property type="hits" value="0 hits in 10 CRISPR screens"/>
</dbReference>
<dbReference type="PRO" id="PR:P40693"/>
<dbReference type="Proteomes" id="UP000002311">
    <property type="component" value="Chromosome XIV"/>
</dbReference>
<dbReference type="RNAct" id="P40693">
    <property type="molecule type" value="protein"/>
</dbReference>
<dbReference type="GO" id="GO:0022625">
    <property type="term" value="C:cytosolic large ribosomal subunit"/>
    <property type="evidence" value="ECO:0000318"/>
    <property type="project" value="GO_Central"/>
</dbReference>
<dbReference type="GO" id="GO:0005730">
    <property type="term" value="C:nucleolus"/>
    <property type="evidence" value="ECO:0000314"/>
    <property type="project" value="SGD"/>
</dbReference>
<dbReference type="GO" id="GO:0030687">
    <property type="term" value="C:preribosome, large subunit precursor"/>
    <property type="evidence" value="ECO:0000314"/>
    <property type="project" value="SGD"/>
</dbReference>
<dbReference type="GO" id="GO:0003729">
    <property type="term" value="F:mRNA binding"/>
    <property type="evidence" value="ECO:0007005"/>
    <property type="project" value="SGD"/>
</dbReference>
<dbReference type="GO" id="GO:0003723">
    <property type="term" value="F:RNA binding"/>
    <property type="evidence" value="ECO:0000318"/>
    <property type="project" value="GO_Central"/>
</dbReference>
<dbReference type="GO" id="GO:0042134">
    <property type="term" value="F:rRNA primary transcript binding"/>
    <property type="evidence" value="ECO:0000314"/>
    <property type="project" value="SGD"/>
</dbReference>
<dbReference type="GO" id="GO:0003735">
    <property type="term" value="F:structural constituent of ribosome"/>
    <property type="evidence" value="ECO:0000318"/>
    <property type="project" value="GO_Central"/>
</dbReference>
<dbReference type="GO" id="GO:0000465">
    <property type="term" value="P:exonucleolytic trimming to generate mature 5'-end of 5.8S rRNA from tricistronic rRNA transcript (SSU-rRNA, 5.8S rRNA, LSU-rRNA)"/>
    <property type="evidence" value="ECO:0000315"/>
    <property type="project" value="SGD"/>
</dbReference>
<dbReference type="GO" id="GO:0000463">
    <property type="term" value="P:maturation of LSU-rRNA from tricistronic rRNA transcript (SSU-rRNA, 5.8S rRNA, LSU-rRNA)"/>
    <property type="evidence" value="ECO:0000315"/>
    <property type="project" value="SGD"/>
</dbReference>
<dbReference type="GO" id="GO:0042273">
    <property type="term" value="P:ribosomal large subunit biogenesis"/>
    <property type="evidence" value="ECO:0000314"/>
    <property type="project" value="SGD"/>
</dbReference>
<dbReference type="CDD" id="cd01657">
    <property type="entry name" value="Ribosomal_L7_archeal_euk"/>
    <property type="match status" value="1"/>
</dbReference>
<dbReference type="FunFam" id="3.30.1390.20:FF:000013">
    <property type="entry name" value="Rlp7p"/>
    <property type="match status" value="1"/>
</dbReference>
<dbReference type="Gene3D" id="3.30.1390.20">
    <property type="entry name" value="Ribosomal protein L30, ferredoxin-like fold domain"/>
    <property type="match status" value="1"/>
</dbReference>
<dbReference type="InterPro" id="IPR036919">
    <property type="entry name" value="Ribo_uL30_ferredoxin-like_sf"/>
</dbReference>
<dbReference type="InterPro" id="IPR039699">
    <property type="entry name" value="Ribosomal_uL30"/>
</dbReference>
<dbReference type="InterPro" id="IPR018038">
    <property type="entry name" value="Ribosomal_uL30_CS"/>
</dbReference>
<dbReference type="InterPro" id="IPR035808">
    <property type="entry name" value="Ribosomal_uL30_euk_arc"/>
</dbReference>
<dbReference type="InterPro" id="IPR016082">
    <property type="entry name" value="Ribosomal_uL30_ferredoxin-like"/>
</dbReference>
<dbReference type="PANTHER" id="PTHR11524">
    <property type="entry name" value="60S RIBOSOMAL PROTEIN L7"/>
    <property type="match status" value="1"/>
</dbReference>
<dbReference type="PANTHER" id="PTHR11524:SF26">
    <property type="entry name" value="RIBOSOME BIOGENESIS PROTEIN RLP7"/>
    <property type="match status" value="1"/>
</dbReference>
<dbReference type="Pfam" id="PF00327">
    <property type="entry name" value="Ribosomal_L30"/>
    <property type="match status" value="1"/>
</dbReference>
<dbReference type="SUPFAM" id="SSF55129">
    <property type="entry name" value="Ribosomal protein L30p/L7e"/>
    <property type="match status" value="1"/>
</dbReference>
<dbReference type="PROSITE" id="PS00634">
    <property type="entry name" value="RIBOSOMAL_L30"/>
    <property type="match status" value="1"/>
</dbReference>
<sequence length="322" mass="36559">MSSTQDSKAQTLNSNPEILLRKRRNADRTRIERQELAKKKREEQIKKKRSNKNKFVRAESIVAKTLATSREKERIKRVSILEDKKAKNETQHIASGKDFILKITEKANGAEENSVDLEETEEEEDDGLIREKTTYDGKPALLFIVRVRGPLAVNIPNKAFKILSLLRLVETNTGVFVKLTKNVYPLLKVIAPYVVIGKPSLSSIRSLIQKRGRIIYKGENEAEPHEIVLNDNNIVEEQLGDHGIICVEDIIHEIATMGESFSVCNFFLQPFKLNREVSGFGSLNRLRKIKQREAESRTRQFSNAATAPVIEVDIDSLLAKLN</sequence>
<reference key="1">
    <citation type="journal article" date="1993" name="C. R. Acad. Sci. III, Sci. Vie">
        <title>Two yeast chromosomes are related by a fossil duplication of their centromeric regions.</title>
        <authorList>
            <person name="Lalo D."/>
            <person name="Stettler S."/>
            <person name="Mariotte S."/>
            <person name="Slonimski P.P."/>
            <person name="Thuriaux P."/>
        </authorList>
    </citation>
    <scope>NUCLEOTIDE SEQUENCE [GENOMIC DNA]</scope>
    <source>
        <strain>S288c / GRF88</strain>
    </source>
</reference>
<reference key="2">
    <citation type="journal article" date="1993" name="Yeast">
        <title>Two distinct yeast proteins are related to the mammalian ribosomal polypeptide L7.</title>
        <authorList>
            <person name="Lalo D."/>
            <person name="Mariotte S."/>
            <person name="Thuriaux P."/>
        </authorList>
    </citation>
    <scope>NUCLEOTIDE SEQUENCE [GENOMIC DNA]</scope>
    <source>
        <strain>S288c / GRF88</strain>
    </source>
</reference>
<reference key="3">
    <citation type="journal article" date="1994" name="Yeast">
        <title>Organization of the centromeric region of chromosome XIV in Saccharomyces cerevisiae.</title>
        <authorList>
            <person name="Lalo D."/>
            <person name="Stettler S."/>
            <person name="Mariotte S."/>
            <person name="Gendreau E."/>
            <person name="Thuriaux P."/>
        </authorList>
    </citation>
    <scope>NUCLEOTIDE SEQUENCE [GENOMIC DNA]</scope>
    <source>
        <strain>S288c / GRF88</strain>
    </source>
</reference>
<reference key="4">
    <citation type="journal article" date="1994" name="Yeast">
        <title>Nucleotide sequence analysis of an 8887 bp region of the left arm of yeast chromosome XIV, encompassing the centromere sequence.</title>
        <authorList>
            <person name="Verhasselt P."/>
            <person name="Aert R."/>
            <person name="Voet M."/>
            <person name="Volckaert G."/>
        </authorList>
    </citation>
    <scope>NUCLEOTIDE SEQUENCE [GENOMIC DNA]</scope>
    <source>
        <strain>ATCC 96604 / S288c / FY1679</strain>
    </source>
</reference>
<reference key="5">
    <citation type="journal article" date="1997" name="Nature">
        <title>The nucleotide sequence of Saccharomyces cerevisiae chromosome XIV and its evolutionary implications.</title>
        <authorList>
            <person name="Philippsen P."/>
            <person name="Kleine K."/>
            <person name="Poehlmann R."/>
            <person name="Duesterhoeft A."/>
            <person name="Hamberg K."/>
            <person name="Hegemann J.H."/>
            <person name="Obermaier B."/>
            <person name="Urrestarazu L.A."/>
            <person name="Aert R."/>
            <person name="Albermann K."/>
            <person name="Altmann R."/>
            <person name="Andre B."/>
            <person name="Baladron V."/>
            <person name="Ballesta J.P.G."/>
            <person name="Becam A.-M."/>
            <person name="Beinhauer J.D."/>
            <person name="Boskovic J."/>
            <person name="Buitrago M.J."/>
            <person name="Bussereau F."/>
            <person name="Coster F."/>
            <person name="Crouzet M."/>
            <person name="D'Angelo M."/>
            <person name="Dal Pero F."/>
            <person name="De Antoni A."/>
            <person name="del Rey F."/>
            <person name="Doignon F."/>
            <person name="Domdey H."/>
            <person name="Dubois E."/>
            <person name="Fiedler T.A."/>
            <person name="Fleig U."/>
            <person name="Floeth M."/>
            <person name="Fritz C."/>
            <person name="Gaillardin C."/>
            <person name="Garcia-Cantalejo J.M."/>
            <person name="Glansdorff N."/>
            <person name="Goffeau A."/>
            <person name="Gueldener U."/>
            <person name="Herbert C.J."/>
            <person name="Heumann K."/>
            <person name="Heuss-Neitzel D."/>
            <person name="Hilbert H."/>
            <person name="Hinni K."/>
            <person name="Iraqui Houssaini I."/>
            <person name="Jacquet M."/>
            <person name="Jimenez A."/>
            <person name="Jonniaux J.-L."/>
            <person name="Karpfinger-Hartl L."/>
            <person name="Lanfranchi G."/>
            <person name="Lepingle A."/>
            <person name="Levesque H."/>
            <person name="Lyck R."/>
            <person name="Maftahi M."/>
            <person name="Mallet L."/>
            <person name="Maurer C.T.C."/>
            <person name="Messenguy F."/>
            <person name="Mewes H.-W."/>
            <person name="Moestl D."/>
            <person name="Nasr F."/>
            <person name="Nicaud J.-M."/>
            <person name="Niedenthal R.K."/>
            <person name="Pandolfo D."/>
            <person name="Pierard A."/>
            <person name="Piravandi E."/>
            <person name="Planta R.J."/>
            <person name="Pohl T.M."/>
            <person name="Purnelle B."/>
            <person name="Rebischung C."/>
            <person name="Remacha M.A."/>
            <person name="Revuelta J.L."/>
            <person name="Rinke M."/>
            <person name="Saiz J.E."/>
            <person name="Sartorello F."/>
            <person name="Scherens B."/>
            <person name="Sen-Gupta M."/>
            <person name="Soler-Mira A."/>
            <person name="Urbanus J.H.M."/>
            <person name="Valle G."/>
            <person name="Van Dyck L."/>
            <person name="Verhasselt P."/>
            <person name="Vierendeels F."/>
            <person name="Vissers S."/>
            <person name="Voet M."/>
            <person name="Volckaert G."/>
            <person name="Wach A."/>
            <person name="Wambutt R."/>
            <person name="Wedler H."/>
            <person name="Zollner A."/>
            <person name="Hani J."/>
        </authorList>
    </citation>
    <scope>NUCLEOTIDE SEQUENCE [LARGE SCALE GENOMIC DNA]</scope>
    <source>
        <strain>ATCC 204508 / S288c</strain>
    </source>
</reference>
<reference key="6">
    <citation type="journal article" date="2014" name="G3 (Bethesda)">
        <title>The reference genome sequence of Saccharomyces cerevisiae: Then and now.</title>
        <authorList>
            <person name="Engel S.R."/>
            <person name="Dietrich F.S."/>
            <person name="Fisk D.G."/>
            <person name="Binkley G."/>
            <person name="Balakrishnan R."/>
            <person name="Costanzo M.C."/>
            <person name="Dwight S.S."/>
            <person name="Hitz B.C."/>
            <person name="Karra K."/>
            <person name="Nash R.S."/>
            <person name="Weng S."/>
            <person name="Wong E.D."/>
            <person name="Lloyd P."/>
            <person name="Skrzypek M.S."/>
            <person name="Miyasato S.R."/>
            <person name="Simison M."/>
            <person name="Cherry J.M."/>
        </authorList>
    </citation>
    <scope>GENOME REANNOTATION</scope>
    <source>
        <strain>ATCC 204508 / S288c</strain>
    </source>
</reference>
<reference key="7">
    <citation type="journal article" date="2007" name="Genome Res.">
        <title>Approaching a complete repository of sequence-verified protein-encoding clones for Saccharomyces cerevisiae.</title>
        <authorList>
            <person name="Hu Y."/>
            <person name="Rolfs A."/>
            <person name="Bhullar B."/>
            <person name="Murthy T.V.S."/>
            <person name="Zhu C."/>
            <person name="Berger M.F."/>
            <person name="Camargo A.A."/>
            <person name="Kelley F."/>
            <person name="McCarron S."/>
            <person name="Jepson D."/>
            <person name="Richardson A."/>
            <person name="Raphael J."/>
            <person name="Moreira D."/>
            <person name="Taycher E."/>
            <person name="Zuo D."/>
            <person name="Mohr S."/>
            <person name="Kane M.F."/>
            <person name="Williamson J."/>
            <person name="Simpson A.J.G."/>
            <person name="Bulyk M.L."/>
            <person name="Harlow E."/>
            <person name="Marsischky G."/>
            <person name="Kolodner R.D."/>
            <person name="LaBaer J."/>
        </authorList>
    </citation>
    <scope>NUCLEOTIDE SEQUENCE [GENOMIC DNA]</scope>
    <source>
        <strain>ATCC 204508 / S288c</strain>
    </source>
</reference>
<reference key="8">
    <citation type="journal article" date="2000" name="Proc. Natl. Acad. Sci. U.S.A.">
        <title>A nucleolar protein related to ribosomal protein L7 is required for an early step in large ribosomal subunit biogenesis.</title>
        <authorList>
            <person name="Dunbar D.A."/>
            <person name="Dragon F."/>
            <person name="Lee S.J."/>
            <person name="Baserga S.J."/>
        </authorList>
    </citation>
    <scope>FUNCTION</scope>
    <scope>SUBCELLULAR LOCATION</scope>
</reference>
<reference key="9">
    <citation type="journal article" date="2003" name="Nature">
        <title>Global analysis of protein expression in yeast.</title>
        <authorList>
            <person name="Ghaemmaghami S."/>
            <person name="Huh W.-K."/>
            <person name="Bower K."/>
            <person name="Howson R.W."/>
            <person name="Belle A."/>
            <person name="Dephoure N."/>
            <person name="O'Shea E.K."/>
            <person name="Weissman J.S."/>
        </authorList>
    </citation>
    <scope>LEVEL OF PROTEIN EXPRESSION [LARGE SCALE ANALYSIS]</scope>
</reference>
<reference key="10">
    <citation type="journal article" date="2007" name="J. Proteome Res.">
        <title>Large-scale phosphorylation analysis of alpha-factor-arrested Saccharomyces cerevisiae.</title>
        <authorList>
            <person name="Li X."/>
            <person name="Gerber S.A."/>
            <person name="Rudner A.D."/>
            <person name="Beausoleil S.A."/>
            <person name="Haas W."/>
            <person name="Villen J."/>
            <person name="Elias J.E."/>
            <person name="Gygi S.P."/>
        </authorList>
    </citation>
    <scope>PHOSPHORYLATION [LARGE SCALE ANALYSIS] AT THR-120</scope>
    <scope>IDENTIFICATION BY MASS SPECTROMETRY [LARGE SCALE ANALYSIS]</scope>
    <source>
        <strain>ADR376</strain>
    </source>
</reference>
<reference key="11">
    <citation type="journal article" date="2007" name="Proc. Natl. Acad. Sci. U.S.A.">
        <title>Analysis of phosphorylation sites on proteins from Saccharomyces cerevisiae by electron transfer dissociation (ETD) mass spectrometry.</title>
        <authorList>
            <person name="Chi A."/>
            <person name="Huttenhower C."/>
            <person name="Geer L.Y."/>
            <person name="Coon J.J."/>
            <person name="Syka J.E.P."/>
            <person name="Bai D.L."/>
            <person name="Shabanowitz J."/>
            <person name="Burke D.J."/>
            <person name="Troyanskaya O.G."/>
            <person name="Hunt D.F."/>
        </authorList>
    </citation>
    <scope>PHOSPHORYLATION [LARGE SCALE ANALYSIS] AT SER-278</scope>
    <scope>IDENTIFICATION BY MASS SPECTROMETRY [LARGE SCALE ANALYSIS]</scope>
</reference>
<reference key="12">
    <citation type="journal article" date="2008" name="Mol. Cell. Proteomics">
        <title>A multidimensional chromatography technology for in-depth phosphoproteome analysis.</title>
        <authorList>
            <person name="Albuquerque C.P."/>
            <person name="Smolka M.B."/>
            <person name="Payne S.H."/>
            <person name="Bafna V."/>
            <person name="Eng J."/>
            <person name="Zhou H."/>
        </authorList>
    </citation>
    <scope>PHOSPHORYLATION [LARGE SCALE ANALYSIS] AT SER-14; THR-120 AND SER-278</scope>
    <scope>IDENTIFICATION BY MASS SPECTROMETRY [LARGE SCALE ANALYSIS]</scope>
</reference>
<reference key="13">
    <citation type="journal article" date="2009" name="Science">
        <title>Global analysis of Cdk1 substrate phosphorylation sites provides insights into evolution.</title>
        <authorList>
            <person name="Holt L.J."/>
            <person name="Tuch B.B."/>
            <person name="Villen J."/>
            <person name="Johnson A.D."/>
            <person name="Gygi S.P."/>
            <person name="Morgan D.O."/>
        </authorList>
    </citation>
    <scope>PHOSPHORYLATION [LARGE SCALE ANALYSIS] AT THR-120</scope>
    <scope>IDENTIFICATION BY MASS SPECTROMETRY [LARGE SCALE ANALYSIS]</scope>
</reference>
<reference key="14">
    <citation type="journal article" date="2012" name="Proc. Natl. Acad. Sci. U.S.A.">
        <title>N-terminal acetylome analyses and functional insights of the N-terminal acetyltransferase NatB.</title>
        <authorList>
            <person name="Van Damme P."/>
            <person name="Lasa M."/>
            <person name="Polevoda B."/>
            <person name="Gazquez C."/>
            <person name="Elosegui-Artola A."/>
            <person name="Kim D.S."/>
            <person name="De Juan-Pardo E."/>
            <person name="Demeyer K."/>
            <person name="Hole K."/>
            <person name="Larrea E."/>
            <person name="Timmerman E."/>
            <person name="Prieto J."/>
            <person name="Arnesen T."/>
            <person name="Sherman F."/>
            <person name="Gevaert K."/>
            <person name="Aldabe R."/>
        </authorList>
    </citation>
    <scope>ACETYLATION [LARGE SCALE ANALYSIS] AT SER-2</scope>
    <scope>CLEAVAGE OF INITIATOR METHIONINE [LARGE SCALE ANALYSIS]</scope>
    <scope>IDENTIFICATION BY MASS SPECTROMETRY [LARGE SCALE ANALYSIS]</scope>
</reference>
<organism>
    <name type="scientific">Saccharomyces cerevisiae (strain ATCC 204508 / S288c)</name>
    <name type="common">Baker's yeast</name>
    <dbReference type="NCBI Taxonomy" id="559292"/>
    <lineage>
        <taxon>Eukaryota</taxon>
        <taxon>Fungi</taxon>
        <taxon>Dikarya</taxon>
        <taxon>Ascomycota</taxon>
        <taxon>Saccharomycotina</taxon>
        <taxon>Saccharomycetes</taxon>
        <taxon>Saccharomycetales</taxon>
        <taxon>Saccharomycetaceae</taxon>
        <taxon>Saccharomyces</taxon>
    </lineage>
</organism>